<evidence type="ECO:0000255" key="1">
    <source>
        <dbReference type="HAMAP-Rule" id="MF_01454"/>
    </source>
</evidence>
<evidence type="ECO:0000255" key="2">
    <source>
        <dbReference type="PROSITE-ProRule" id="PRU01231"/>
    </source>
</evidence>
<feature type="chain" id="PRO_0000385695" description="GTPase Obg">
    <location>
        <begin position="1"/>
        <end position="354"/>
    </location>
</feature>
<feature type="domain" description="Obg" evidence="2">
    <location>
        <begin position="1"/>
        <end position="159"/>
    </location>
</feature>
<feature type="domain" description="OBG-type G" evidence="1">
    <location>
        <begin position="160"/>
        <end position="333"/>
    </location>
</feature>
<feature type="binding site" evidence="1">
    <location>
        <begin position="166"/>
        <end position="173"/>
    </location>
    <ligand>
        <name>GTP</name>
        <dbReference type="ChEBI" id="CHEBI:37565"/>
    </ligand>
</feature>
<feature type="binding site" evidence="1">
    <location>
        <position position="173"/>
    </location>
    <ligand>
        <name>Mg(2+)</name>
        <dbReference type="ChEBI" id="CHEBI:18420"/>
    </ligand>
</feature>
<feature type="binding site" evidence="1">
    <location>
        <begin position="191"/>
        <end position="195"/>
    </location>
    <ligand>
        <name>GTP</name>
        <dbReference type="ChEBI" id="CHEBI:37565"/>
    </ligand>
</feature>
<feature type="binding site" evidence="1">
    <location>
        <position position="193"/>
    </location>
    <ligand>
        <name>Mg(2+)</name>
        <dbReference type="ChEBI" id="CHEBI:18420"/>
    </ligand>
</feature>
<feature type="binding site" evidence="1">
    <location>
        <begin position="212"/>
        <end position="215"/>
    </location>
    <ligand>
        <name>GTP</name>
        <dbReference type="ChEBI" id="CHEBI:37565"/>
    </ligand>
</feature>
<feature type="binding site" evidence="1">
    <location>
        <begin position="283"/>
        <end position="286"/>
    </location>
    <ligand>
        <name>GTP</name>
        <dbReference type="ChEBI" id="CHEBI:37565"/>
    </ligand>
</feature>
<feature type="binding site" evidence="1">
    <location>
        <begin position="314"/>
        <end position="316"/>
    </location>
    <ligand>
        <name>GTP</name>
        <dbReference type="ChEBI" id="CHEBI:37565"/>
    </ligand>
</feature>
<keyword id="KW-0963">Cytoplasm</keyword>
<keyword id="KW-0342">GTP-binding</keyword>
<keyword id="KW-0378">Hydrolase</keyword>
<keyword id="KW-0460">Magnesium</keyword>
<keyword id="KW-0479">Metal-binding</keyword>
<keyword id="KW-0547">Nucleotide-binding</keyword>
<sequence length="354" mass="37279">MKFVDEVKIHVKAGDGGDGAVAWRREKFIPRGGPAGGDGGNGGDVVLEVDPQLSTLLDYRYIREHKARNGEKGSGSDMNGKDGADLVLRVPPGTVVKDAATGEQLCDLGAAGERVVIAKGGRGGLGNMNFASSTNQAPRYAEDGTPGAERDLVLELKLLADVGIVGYPNAGKSTLISRISRARPKIADYPFTTLTPNLGVVGWRERSFVVADIPGLIEGAHAGAGLGHQFLRHVERCRVLIHLVEGANPEPGRAPRADLDAINAELAAYSDELAKKPQIVAVTKIDVPEARAAGVKLQKLLGRRKKPVPVHLVSAVTGEGLDALLDAVGRALFKEARPHRGGGGKKLAKPRARA</sequence>
<protein>
    <recommendedName>
        <fullName evidence="1">GTPase Obg</fullName>
        <ecNumber evidence="1">3.6.5.-</ecNumber>
    </recommendedName>
    <alternativeName>
        <fullName evidence="1">GTP-binding protein Obg</fullName>
    </alternativeName>
</protein>
<comment type="function">
    <text evidence="1">An essential GTPase which binds GTP, GDP and possibly (p)ppGpp with moderate affinity, with high nucleotide exchange rates and a fairly low GTP hydrolysis rate. Plays a role in control of the cell cycle, stress response, ribosome biogenesis and in those bacteria that undergo differentiation, in morphogenesis control.</text>
</comment>
<comment type="cofactor">
    <cofactor evidence="1">
        <name>Mg(2+)</name>
        <dbReference type="ChEBI" id="CHEBI:18420"/>
    </cofactor>
</comment>
<comment type="subunit">
    <text evidence="1">Monomer.</text>
</comment>
<comment type="subcellular location">
    <subcellularLocation>
        <location evidence="1">Cytoplasm</location>
    </subcellularLocation>
</comment>
<comment type="similarity">
    <text evidence="1">Belongs to the TRAFAC class OBG-HflX-like GTPase superfamily. OBG GTPase family.</text>
</comment>
<dbReference type="EC" id="3.6.5.-" evidence="1"/>
<dbReference type="EMBL" id="CP001131">
    <property type="protein sequence ID" value="ACG75514.1"/>
    <property type="molecule type" value="Genomic_DNA"/>
</dbReference>
<dbReference type="RefSeq" id="WP_012528266.1">
    <property type="nucleotide sequence ID" value="NC_011145.1"/>
</dbReference>
<dbReference type="SMR" id="B4UIU2"/>
<dbReference type="KEGG" id="ank:AnaeK_4311"/>
<dbReference type="HOGENOM" id="CLU_011747_2_0_7"/>
<dbReference type="OrthoDB" id="9807318at2"/>
<dbReference type="Proteomes" id="UP000001871">
    <property type="component" value="Chromosome"/>
</dbReference>
<dbReference type="GO" id="GO:0005737">
    <property type="term" value="C:cytoplasm"/>
    <property type="evidence" value="ECO:0007669"/>
    <property type="project" value="UniProtKB-SubCell"/>
</dbReference>
<dbReference type="GO" id="GO:0005525">
    <property type="term" value="F:GTP binding"/>
    <property type="evidence" value="ECO:0007669"/>
    <property type="project" value="UniProtKB-UniRule"/>
</dbReference>
<dbReference type="GO" id="GO:0003924">
    <property type="term" value="F:GTPase activity"/>
    <property type="evidence" value="ECO:0007669"/>
    <property type="project" value="UniProtKB-UniRule"/>
</dbReference>
<dbReference type="GO" id="GO:0000287">
    <property type="term" value="F:magnesium ion binding"/>
    <property type="evidence" value="ECO:0007669"/>
    <property type="project" value="InterPro"/>
</dbReference>
<dbReference type="GO" id="GO:0042254">
    <property type="term" value="P:ribosome biogenesis"/>
    <property type="evidence" value="ECO:0007669"/>
    <property type="project" value="UniProtKB-UniRule"/>
</dbReference>
<dbReference type="CDD" id="cd01898">
    <property type="entry name" value="Obg"/>
    <property type="match status" value="1"/>
</dbReference>
<dbReference type="FunFam" id="2.70.210.12:FF:000001">
    <property type="entry name" value="GTPase Obg"/>
    <property type="match status" value="1"/>
</dbReference>
<dbReference type="Gene3D" id="2.70.210.12">
    <property type="entry name" value="GTP1/OBG domain"/>
    <property type="match status" value="1"/>
</dbReference>
<dbReference type="Gene3D" id="3.40.50.300">
    <property type="entry name" value="P-loop containing nucleotide triphosphate hydrolases"/>
    <property type="match status" value="1"/>
</dbReference>
<dbReference type="HAMAP" id="MF_01454">
    <property type="entry name" value="GTPase_Obg"/>
    <property type="match status" value="1"/>
</dbReference>
<dbReference type="InterPro" id="IPR031167">
    <property type="entry name" value="G_OBG"/>
</dbReference>
<dbReference type="InterPro" id="IPR006073">
    <property type="entry name" value="GTP-bd"/>
</dbReference>
<dbReference type="InterPro" id="IPR014100">
    <property type="entry name" value="GTP-bd_Obg/CgtA"/>
</dbReference>
<dbReference type="InterPro" id="IPR006074">
    <property type="entry name" value="GTP1-OBG_CS"/>
</dbReference>
<dbReference type="InterPro" id="IPR006169">
    <property type="entry name" value="GTP1_OBG_dom"/>
</dbReference>
<dbReference type="InterPro" id="IPR036726">
    <property type="entry name" value="GTP1_OBG_dom_sf"/>
</dbReference>
<dbReference type="InterPro" id="IPR045086">
    <property type="entry name" value="OBG_GTPase"/>
</dbReference>
<dbReference type="InterPro" id="IPR027417">
    <property type="entry name" value="P-loop_NTPase"/>
</dbReference>
<dbReference type="NCBIfam" id="TIGR02729">
    <property type="entry name" value="Obg_CgtA"/>
    <property type="match status" value="1"/>
</dbReference>
<dbReference type="NCBIfam" id="NF008954">
    <property type="entry name" value="PRK12296.1"/>
    <property type="match status" value="1"/>
</dbReference>
<dbReference type="NCBIfam" id="NF008955">
    <property type="entry name" value="PRK12297.1"/>
    <property type="match status" value="1"/>
</dbReference>
<dbReference type="NCBIfam" id="NF008956">
    <property type="entry name" value="PRK12299.1"/>
    <property type="match status" value="1"/>
</dbReference>
<dbReference type="PANTHER" id="PTHR11702">
    <property type="entry name" value="DEVELOPMENTALLY REGULATED GTP-BINDING PROTEIN-RELATED"/>
    <property type="match status" value="1"/>
</dbReference>
<dbReference type="PANTHER" id="PTHR11702:SF31">
    <property type="entry name" value="MITOCHONDRIAL RIBOSOME-ASSOCIATED GTPASE 2"/>
    <property type="match status" value="1"/>
</dbReference>
<dbReference type="Pfam" id="PF01018">
    <property type="entry name" value="GTP1_OBG"/>
    <property type="match status" value="1"/>
</dbReference>
<dbReference type="Pfam" id="PF01926">
    <property type="entry name" value="MMR_HSR1"/>
    <property type="match status" value="1"/>
</dbReference>
<dbReference type="PIRSF" id="PIRSF002401">
    <property type="entry name" value="GTP_bd_Obg/CgtA"/>
    <property type="match status" value="1"/>
</dbReference>
<dbReference type="PRINTS" id="PR00326">
    <property type="entry name" value="GTP1OBG"/>
</dbReference>
<dbReference type="SUPFAM" id="SSF82051">
    <property type="entry name" value="Obg GTP-binding protein N-terminal domain"/>
    <property type="match status" value="1"/>
</dbReference>
<dbReference type="SUPFAM" id="SSF52540">
    <property type="entry name" value="P-loop containing nucleoside triphosphate hydrolases"/>
    <property type="match status" value="1"/>
</dbReference>
<dbReference type="PROSITE" id="PS51710">
    <property type="entry name" value="G_OBG"/>
    <property type="match status" value="1"/>
</dbReference>
<dbReference type="PROSITE" id="PS00905">
    <property type="entry name" value="GTP1_OBG"/>
    <property type="match status" value="1"/>
</dbReference>
<dbReference type="PROSITE" id="PS51883">
    <property type="entry name" value="OBG"/>
    <property type="match status" value="1"/>
</dbReference>
<reference key="1">
    <citation type="submission" date="2008-08" db="EMBL/GenBank/DDBJ databases">
        <title>Complete sequence of Anaeromyxobacter sp. K.</title>
        <authorList>
            <consortium name="US DOE Joint Genome Institute"/>
            <person name="Lucas S."/>
            <person name="Copeland A."/>
            <person name="Lapidus A."/>
            <person name="Glavina del Rio T."/>
            <person name="Dalin E."/>
            <person name="Tice H."/>
            <person name="Bruce D."/>
            <person name="Goodwin L."/>
            <person name="Pitluck S."/>
            <person name="Saunders E."/>
            <person name="Brettin T."/>
            <person name="Detter J.C."/>
            <person name="Han C."/>
            <person name="Larimer F."/>
            <person name="Land M."/>
            <person name="Hauser L."/>
            <person name="Kyrpides N."/>
            <person name="Ovchinnikiva G."/>
            <person name="Beliaev A."/>
        </authorList>
    </citation>
    <scope>NUCLEOTIDE SEQUENCE [LARGE SCALE GENOMIC DNA]</scope>
    <source>
        <strain>K</strain>
    </source>
</reference>
<proteinExistence type="inferred from homology"/>
<name>OBG_ANASK</name>
<organism>
    <name type="scientific">Anaeromyxobacter sp. (strain K)</name>
    <dbReference type="NCBI Taxonomy" id="447217"/>
    <lineage>
        <taxon>Bacteria</taxon>
        <taxon>Pseudomonadati</taxon>
        <taxon>Myxococcota</taxon>
        <taxon>Myxococcia</taxon>
        <taxon>Myxococcales</taxon>
        <taxon>Cystobacterineae</taxon>
        <taxon>Anaeromyxobacteraceae</taxon>
        <taxon>Anaeromyxobacter</taxon>
    </lineage>
</organism>
<gene>
    <name evidence="1" type="primary">obg</name>
    <name type="ordered locus">AnaeK_4311</name>
</gene>
<accession>B4UIU2</accession>